<name>ISPDF_ANADE</name>
<dbReference type="EC" id="2.7.7.60" evidence="1"/>
<dbReference type="EC" id="4.6.1.12" evidence="1"/>
<dbReference type="EMBL" id="CP000251">
    <property type="protein sequence ID" value="ABC81046.1"/>
    <property type="molecule type" value="Genomic_DNA"/>
</dbReference>
<dbReference type="RefSeq" id="WP_011420329.1">
    <property type="nucleotide sequence ID" value="NC_007760.1"/>
</dbReference>
<dbReference type="SMR" id="Q2IQG8"/>
<dbReference type="STRING" id="290397.Adeh_1272"/>
<dbReference type="KEGG" id="ade:Adeh_1272"/>
<dbReference type="eggNOG" id="COG0245">
    <property type="taxonomic scope" value="Bacteria"/>
</dbReference>
<dbReference type="eggNOG" id="COG1211">
    <property type="taxonomic scope" value="Bacteria"/>
</dbReference>
<dbReference type="HOGENOM" id="CLU_042800_2_5_7"/>
<dbReference type="OrthoDB" id="9804336at2"/>
<dbReference type="UniPathway" id="UPA00056">
    <property type="reaction ID" value="UER00093"/>
</dbReference>
<dbReference type="UniPathway" id="UPA00056">
    <property type="reaction ID" value="UER00095"/>
</dbReference>
<dbReference type="Proteomes" id="UP000001935">
    <property type="component" value="Chromosome"/>
</dbReference>
<dbReference type="GO" id="GO:0008685">
    <property type="term" value="F:2-C-methyl-D-erythritol 2,4-cyclodiphosphate synthase activity"/>
    <property type="evidence" value="ECO:0007669"/>
    <property type="project" value="UniProtKB-UniRule"/>
</dbReference>
<dbReference type="GO" id="GO:0050518">
    <property type="term" value="F:2-C-methyl-D-erythritol 4-phosphate cytidylyltransferase activity"/>
    <property type="evidence" value="ECO:0007669"/>
    <property type="project" value="UniProtKB-UniRule"/>
</dbReference>
<dbReference type="GO" id="GO:0046872">
    <property type="term" value="F:metal ion binding"/>
    <property type="evidence" value="ECO:0007669"/>
    <property type="project" value="UniProtKB-KW"/>
</dbReference>
<dbReference type="GO" id="GO:0019288">
    <property type="term" value="P:isopentenyl diphosphate biosynthetic process, methylerythritol 4-phosphate pathway"/>
    <property type="evidence" value="ECO:0007669"/>
    <property type="project" value="UniProtKB-UniRule"/>
</dbReference>
<dbReference type="GO" id="GO:0016114">
    <property type="term" value="P:terpenoid biosynthetic process"/>
    <property type="evidence" value="ECO:0007669"/>
    <property type="project" value="InterPro"/>
</dbReference>
<dbReference type="CDD" id="cd02516">
    <property type="entry name" value="CDP-ME_synthetase"/>
    <property type="match status" value="1"/>
</dbReference>
<dbReference type="CDD" id="cd00554">
    <property type="entry name" value="MECDP_synthase"/>
    <property type="match status" value="1"/>
</dbReference>
<dbReference type="FunFam" id="3.30.1330.50:FF:000003">
    <property type="entry name" value="2-C-methyl-D-erythritol 2,4-cyclodiphosphate synthase"/>
    <property type="match status" value="1"/>
</dbReference>
<dbReference type="Gene3D" id="3.30.1330.50">
    <property type="entry name" value="2-C-methyl-D-erythritol 2,4-cyclodiphosphate synthase"/>
    <property type="match status" value="1"/>
</dbReference>
<dbReference type="Gene3D" id="3.90.550.10">
    <property type="entry name" value="Spore Coat Polysaccharide Biosynthesis Protein SpsA, Chain A"/>
    <property type="match status" value="1"/>
</dbReference>
<dbReference type="HAMAP" id="MF_00108">
    <property type="entry name" value="IspD"/>
    <property type="match status" value="1"/>
</dbReference>
<dbReference type="HAMAP" id="MF_01520">
    <property type="entry name" value="IspDF"/>
    <property type="match status" value="1"/>
</dbReference>
<dbReference type="HAMAP" id="MF_00107">
    <property type="entry name" value="IspF"/>
    <property type="match status" value="1"/>
</dbReference>
<dbReference type="InterPro" id="IPR001228">
    <property type="entry name" value="IspD"/>
</dbReference>
<dbReference type="InterPro" id="IPR026596">
    <property type="entry name" value="IspD/F"/>
</dbReference>
<dbReference type="InterPro" id="IPR034683">
    <property type="entry name" value="IspD/TarI"/>
</dbReference>
<dbReference type="InterPro" id="IPR018294">
    <property type="entry name" value="ISPD_synthase_CS"/>
</dbReference>
<dbReference type="InterPro" id="IPR003526">
    <property type="entry name" value="MECDP_synthase"/>
</dbReference>
<dbReference type="InterPro" id="IPR036571">
    <property type="entry name" value="MECDP_synthase_sf"/>
</dbReference>
<dbReference type="InterPro" id="IPR029044">
    <property type="entry name" value="Nucleotide-diphossugar_trans"/>
</dbReference>
<dbReference type="NCBIfam" id="TIGR00453">
    <property type="entry name" value="ispD"/>
    <property type="match status" value="1"/>
</dbReference>
<dbReference type="NCBIfam" id="TIGR00151">
    <property type="entry name" value="ispF"/>
    <property type="match status" value="1"/>
</dbReference>
<dbReference type="PANTHER" id="PTHR43181">
    <property type="entry name" value="2-C-METHYL-D-ERYTHRITOL 2,4-CYCLODIPHOSPHATE SYNTHASE, CHLOROPLASTIC"/>
    <property type="match status" value="1"/>
</dbReference>
<dbReference type="PANTHER" id="PTHR43181:SF1">
    <property type="entry name" value="2-C-METHYL-D-ERYTHRITOL 2,4-CYCLODIPHOSPHATE SYNTHASE, CHLOROPLASTIC"/>
    <property type="match status" value="1"/>
</dbReference>
<dbReference type="Pfam" id="PF01128">
    <property type="entry name" value="IspD"/>
    <property type="match status" value="1"/>
</dbReference>
<dbReference type="Pfam" id="PF02542">
    <property type="entry name" value="YgbB"/>
    <property type="match status" value="1"/>
</dbReference>
<dbReference type="SUPFAM" id="SSF69765">
    <property type="entry name" value="IpsF-like"/>
    <property type="match status" value="1"/>
</dbReference>
<dbReference type="SUPFAM" id="SSF53448">
    <property type="entry name" value="Nucleotide-diphospho-sugar transferases"/>
    <property type="match status" value="1"/>
</dbReference>
<dbReference type="PROSITE" id="PS01295">
    <property type="entry name" value="ISPD"/>
    <property type="match status" value="1"/>
</dbReference>
<protein>
    <recommendedName>
        <fullName evidence="1">Bifunctional enzyme IspD/IspF</fullName>
    </recommendedName>
    <domain>
        <recommendedName>
            <fullName evidence="1">2-C-methyl-D-erythritol 4-phosphate cytidylyltransferase</fullName>
            <ecNumber evidence="1">2.7.7.60</ecNumber>
        </recommendedName>
        <alternativeName>
            <fullName evidence="1">4-diphosphocytidyl-2C-methyl-D-erythritol synthase</fullName>
        </alternativeName>
        <alternativeName>
            <fullName evidence="1">MEP cytidylyltransferase</fullName>
            <shortName evidence="1">MCT</shortName>
        </alternativeName>
    </domain>
    <domain>
        <recommendedName>
            <fullName evidence="1">2-C-methyl-D-erythritol 2,4-cyclodiphosphate synthase</fullName>
            <shortName evidence="1">MECDP-synthase</shortName>
            <shortName evidence="1">MECPP-synthase</shortName>
            <shortName evidence="1">MECPS</shortName>
            <ecNumber evidence="1">4.6.1.12</ecNumber>
        </recommendedName>
    </domain>
</protein>
<comment type="function">
    <text evidence="1">Bifunctional enzyme that catalyzes the formation of 4-diphosphocytidyl-2-C-methyl-D-erythritol from CTP and 2-C-methyl-D-erythritol 4-phosphate (MEP) (IspD), and catalyzes the conversion of 4-diphosphocytidyl-2-C-methyl-D-erythritol 2-phosphate (CDP-ME2P) to 2-C-methyl-D-erythritol 2,4-cyclodiphosphate (ME-CPP) with a corresponding release of cytidine 5-monophosphate (CMP) (IspF).</text>
</comment>
<comment type="catalytic activity">
    <reaction evidence="1">
        <text>2-C-methyl-D-erythritol 4-phosphate + CTP + H(+) = 4-CDP-2-C-methyl-D-erythritol + diphosphate</text>
        <dbReference type="Rhea" id="RHEA:13429"/>
        <dbReference type="ChEBI" id="CHEBI:15378"/>
        <dbReference type="ChEBI" id="CHEBI:33019"/>
        <dbReference type="ChEBI" id="CHEBI:37563"/>
        <dbReference type="ChEBI" id="CHEBI:57823"/>
        <dbReference type="ChEBI" id="CHEBI:58262"/>
        <dbReference type="EC" id="2.7.7.60"/>
    </reaction>
</comment>
<comment type="catalytic activity">
    <reaction evidence="1">
        <text>4-CDP-2-C-methyl-D-erythritol 2-phosphate = 2-C-methyl-D-erythritol 2,4-cyclic diphosphate + CMP</text>
        <dbReference type="Rhea" id="RHEA:23864"/>
        <dbReference type="ChEBI" id="CHEBI:57919"/>
        <dbReference type="ChEBI" id="CHEBI:58483"/>
        <dbReference type="ChEBI" id="CHEBI:60377"/>
        <dbReference type="EC" id="4.6.1.12"/>
    </reaction>
</comment>
<comment type="cofactor">
    <cofactor evidence="1">
        <name>a divalent metal cation</name>
        <dbReference type="ChEBI" id="CHEBI:60240"/>
    </cofactor>
</comment>
<comment type="pathway">
    <text evidence="1">Isoprenoid biosynthesis; isopentenyl diphosphate biosynthesis via DXP pathway; isopentenyl diphosphate from 1-deoxy-D-xylulose 5-phosphate: step 2/6.</text>
</comment>
<comment type="pathway">
    <text evidence="1">Isoprenoid biosynthesis; isopentenyl diphosphate biosynthesis via DXP pathway; isopentenyl diphosphate from 1-deoxy-D-xylulose 5-phosphate: step 4/6.</text>
</comment>
<comment type="similarity">
    <text evidence="1">In the N-terminal section; belongs to the IspD/TarI cytidylyltransferase family. IspD subfamily.</text>
</comment>
<comment type="similarity">
    <text evidence="1">In the C-terminal section; belongs to the IspF family.</text>
</comment>
<keyword id="KW-0414">Isoprene biosynthesis</keyword>
<keyword id="KW-0456">Lyase</keyword>
<keyword id="KW-0479">Metal-binding</keyword>
<keyword id="KW-0511">Multifunctional enzyme</keyword>
<keyword id="KW-0548">Nucleotidyltransferase</keyword>
<keyword id="KW-1185">Reference proteome</keyword>
<keyword id="KW-0808">Transferase</keyword>
<accession>Q2IQG8</accession>
<sequence>MIRGERVIGILAAGGSGQRAGVAKQWLVLGGESVLRRSARVLAACDAVDGLVVVVPPGDEARGEAELAGLGKPVRAVAGGPARADSVRNGLAAADGAVVLVHDAARPFASAALAGRVAEAAARDGAALAALPATDTVKRAEAGAEVPRVLETLDRRTVWLAQTPQGFRRAVLEQAYAAAGPSASAATDECALVEAAGAPVTLVPGEPGNFKITGPDDVRRARALLEAPVATGVGYDTHRFAPGRRLVLGGVEFEGDGLLGHSDADVCAHAIGDAILGAAGLGDLGRHFPDTDPRWKGVSSLALLREIAAKAAERGWRVGNCDVTLAAKRPKIAPRAEEMRARLAGALGISPAQVNVKATTGEGMGFVGREEGVAAHAIALLVRAAG</sequence>
<evidence type="ECO:0000255" key="1">
    <source>
        <dbReference type="HAMAP-Rule" id="MF_01520"/>
    </source>
</evidence>
<feature type="chain" id="PRO_0000296738" description="Bifunctional enzyme IspD/IspF">
    <location>
        <begin position="1"/>
        <end position="386"/>
    </location>
</feature>
<feature type="region of interest" description="2-C-methyl-D-erythritol 4-phosphate cytidylyltransferase" evidence="1">
    <location>
        <begin position="1"/>
        <end position="229"/>
    </location>
</feature>
<feature type="region of interest" description="2-C-methyl-D-erythritol 2,4-cyclodiphosphate synthase" evidence="1">
    <location>
        <begin position="230"/>
        <end position="386"/>
    </location>
</feature>
<feature type="binding site" evidence="1">
    <location>
        <begin position="236"/>
        <end position="238"/>
    </location>
    <ligand>
        <name>4-CDP-2-C-methyl-D-erythritol 2-phosphate</name>
        <dbReference type="ChEBI" id="CHEBI:57919"/>
    </ligand>
</feature>
<feature type="binding site" evidence="1">
    <location>
        <position position="236"/>
    </location>
    <ligand>
        <name>a divalent metal cation</name>
        <dbReference type="ChEBI" id="CHEBI:60240"/>
    </ligand>
</feature>
<feature type="binding site" evidence="1">
    <location>
        <position position="238"/>
    </location>
    <ligand>
        <name>a divalent metal cation</name>
        <dbReference type="ChEBI" id="CHEBI:60240"/>
    </ligand>
</feature>
<feature type="binding site" evidence="1">
    <location>
        <begin position="261"/>
        <end position="262"/>
    </location>
    <ligand>
        <name>4-CDP-2-C-methyl-D-erythritol 2-phosphate</name>
        <dbReference type="ChEBI" id="CHEBI:57919"/>
    </ligand>
</feature>
<feature type="binding site" evidence="1">
    <location>
        <position position="269"/>
    </location>
    <ligand>
        <name>a divalent metal cation</name>
        <dbReference type="ChEBI" id="CHEBI:60240"/>
    </ligand>
</feature>
<feature type="binding site" evidence="1">
    <location>
        <begin position="283"/>
        <end position="285"/>
    </location>
    <ligand>
        <name>4-CDP-2-C-methyl-D-erythritol 2-phosphate</name>
        <dbReference type="ChEBI" id="CHEBI:57919"/>
    </ligand>
</feature>
<feature type="binding site" evidence="1">
    <location>
        <begin position="288"/>
        <end position="292"/>
    </location>
    <ligand>
        <name>4-CDP-2-C-methyl-D-erythritol 2-phosphate</name>
        <dbReference type="ChEBI" id="CHEBI:57919"/>
    </ligand>
</feature>
<feature type="binding site" evidence="1">
    <location>
        <begin position="359"/>
        <end position="362"/>
    </location>
    <ligand>
        <name>4-CDP-2-C-methyl-D-erythritol 2-phosphate</name>
        <dbReference type="ChEBI" id="CHEBI:57919"/>
    </ligand>
</feature>
<feature type="binding site" evidence="1">
    <location>
        <position position="366"/>
    </location>
    <ligand>
        <name>4-CDP-2-C-methyl-D-erythritol 2-phosphate</name>
        <dbReference type="ChEBI" id="CHEBI:57919"/>
    </ligand>
</feature>
<feature type="binding site" evidence="1">
    <location>
        <position position="369"/>
    </location>
    <ligand>
        <name>4-CDP-2-C-methyl-D-erythritol 2-phosphate</name>
        <dbReference type="ChEBI" id="CHEBI:57919"/>
    </ligand>
</feature>
<feature type="site" description="Transition state stabilizer" evidence="1">
    <location>
        <position position="19"/>
    </location>
</feature>
<feature type="site" description="Transition state stabilizer" evidence="1">
    <location>
        <position position="24"/>
    </location>
</feature>
<feature type="site" description="Positions MEP for the nucleophilic attack" evidence="1">
    <location>
        <position position="155"/>
    </location>
</feature>
<feature type="site" description="Positions MEP for the nucleophilic attack" evidence="1">
    <location>
        <position position="211"/>
    </location>
</feature>
<feature type="site" description="Transition state stabilizer" evidence="1">
    <location>
        <position position="261"/>
    </location>
</feature>
<feature type="site" description="Transition state stabilizer" evidence="1">
    <location>
        <position position="360"/>
    </location>
</feature>
<reference key="1">
    <citation type="submission" date="2006-01" db="EMBL/GenBank/DDBJ databases">
        <title>Complete sequence of Anaeromyxobacter dehalogenans 2CP-C.</title>
        <authorList>
            <person name="Copeland A."/>
            <person name="Lucas S."/>
            <person name="Lapidus A."/>
            <person name="Barry K."/>
            <person name="Detter J.C."/>
            <person name="Glavina T."/>
            <person name="Hammon N."/>
            <person name="Israni S."/>
            <person name="Pitluck S."/>
            <person name="Brettin T."/>
            <person name="Bruce D."/>
            <person name="Han C."/>
            <person name="Tapia R."/>
            <person name="Gilna P."/>
            <person name="Kiss H."/>
            <person name="Schmutz J."/>
            <person name="Larimer F."/>
            <person name="Land M."/>
            <person name="Kyrpides N."/>
            <person name="Anderson I."/>
            <person name="Sanford R.A."/>
            <person name="Ritalahti K.M."/>
            <person name="Thomas H.S."/>
            <person name="Kirby J.R."/>
            <person name="Zhulin I.B."/>
            <person name="Loeffler F.E."/>
            <person name="Richardson P."/>
        </authorList>
    </citation>
    <scope>NUCLEOTIDE SEQUENCE [LARGE SCALE GENOMIC DNA]</scope>
    <source>
        <strain>2CP-C</strain>
    </source>
</reference>
<gene>
    <name evidence="1" type="primary">ispDF</name>
    <name type="ordered locus">Adeh_1272</name>
</gene>
<proteinExistence type="inferred from homology"/>
<organism>
    <name type="scientific">Anaeromyxobacter dehalogenans (strain 2CP-C)</name>
    <dbReference type="NCBI Taxonomy" id="290397"/>
    <lineage>
        <taxon>Bacteria</taxon>
        <taxon>Pseudomonadati</taxon>
        <taxon>Myxococcota</taxon>
        <taxon>Myxococcia</taxon>
        <taxon>Myxococcales</taxon>
        <taxon>Cystobacterineae</taxon>
        <taxon>Anaeromyxobacteraceae</taxon>
        <taxon>Anaeromyxobacter</taxon>
    </lineage>
</organism>